<gene>
    <name type="primary">DEPP</name>
</gene>
<sequence length="212" mass="23406">MRSRLLLSVAHLPTIRETTEEMLLGGPGQEPPPSPSLDDYVRSISRLAQPTSVLDKATAQGQPRPPHRPAQACRKGRPAVSLRDITARFSGQQPTLPMADTVDPLDWLFGESQEKQPSQRDLPRRTGPSAGLWGPHRQMDSSKPMGAPRGRLCEARMPGHSLARPPQDGQQSSDLRSWTFGQSAQAMASRHRPRPSSVLRTLYSHLPVIHEL</sequence>
<comment type="function">
    <text evidence="1">May play a role in autophagy.</text>
</comment>
<comment type="subcellular location">
    <subcellularLocation>
        <location evidence="1">Cytoplasm</location>
    </subcellularLocation>
    <text evidence="1">May localize to aggresomes.</text>
</comment>
<dbReference type="EMBL" id="CR858707">
    <property type="protein sequence ID" value="CAH90916.1"/>
    <property type="molecule type" value="mRNA"/>
</dbReference>
<dbReference type="RefSeq" id="NP_001125523.1">
    <property type="nucleotide sequence ID" value="NM_001132051.1"/>
</dbReference>
<dbReference type="FunCoup" id="Q5RBE4">
    <property type="interactions" value="332"/>
</dbReference>
<dbReference type="STRING" id="9601.ENSPPYP00000002599"/>
<dbReference type="eggNOG" id="ENOG502T1TA">
    <property type="taxonomic scope" value="Eukaryota"/>
</dbReference>
<dbReference type="InParanoid" id="Q5RBE4"/>
<dbReference type="Proteomes" id="UP000001595">
    <property type="component" value="Unplaced"/>
</dbReference>
<dbReference type="GO" id="GO:0005739">
    <property type="term" value="C:mitochondrion"/>
    <property type="evidence" value="ECO:0007669"/>
    <property type="project" value="TreeGrafter"/>
</dbReference>
<dbReference type="GO" id="GO:0010506">
    <property type="term" value="P:regulation of autophagy"/>
    <property type="evidence" value="ECO:0007669"/>
    <property type="project" value="TreeGrafter"/>
</dbReference>
<dbReference type="InterPro" id="IPR020133">
    <property type="entry name" value="DEPP"/>
</dbReference>
<dbReference type="PANTHER" id="PTHR15426">
    <property type="entry name" value="PROTEIN DEPP1"/>
    <property type="match status" value="1"/>
</dbReference>
<dbReference type="PANTHER" id="PTHR15426:SF6">
    <property type="entry name" value="PROTEIN DEPP1"/>
    <property type="match status" value="1"/>
</dbReference>
<dbReference type="Pfam" id="PF15343">
    <property type="entry name" value="DEPP"/>
    <property type="match status" value="1"/>
</dbReference>
<evidence type="ECO:0000250" key="1"/>
<evidence type="ECO:0000256" key="2">
    <source>
        <dbReference type="SAM" id="MobiDB-lite"/>
    </source>
</evidence>
<keyword id="KW-0963">Cytoplasm</keyword>
<keyword id="KW-1185">Reference proteome</keyword>
<organism>
    <name type="scientific">Pongo abelii</name>
    <name type="common">Sumatran orangutan</name>
    <name type="synonym">Pongo pygmaeus abelii</name>
    <dbReference type="NCBI Taxonomy" id="9601"/>
    <lineage>
        <taxon>Eukaryota</taxon>
        <taxon>Metazoa</taxon>
        <taxon>Chordata</taxon>
        <taxon>Craniata</taxon>
        <taxon>Vertebrata</taxon>
        <taxon>Euteleostomi</taxon>
        <taxon>Mammalia</taxon>
        <taxon>Eutheria</taxon>
        <taxon>Euarchontoglires</taxon>
        <taxon>Primates</taxon>
        <taxon>Haplorrhini</taxon>
        <taxon>Catarrhini</taxon>
        <taxon>Hominidae</taxon>
        <taxon>Pongo</taxon>
    </lineage>
</organism>
<feature type="chain" id="PRO_0000079869" description="Protein DEPP">
    <location>
        <begin position="1"/>
        <end position="212"/>
    </location>
</feature>
<feature type="region of interest" description="Disordered" evidence="2">
    <location>
        <begin position="20"/>
        <end position="39"/>
    </location>
</feature>
<feature type="region of interest" description="Disordered" evidence="2">
    <location>
        <begin position="49"/>
        <end position="79"/>
    </location>
</feature>
<feature type="region of interest" description="Disordered" evidence="2">
    <location>
        <begin position="113"/>
        <end position="176"/>
    </location>
</feature>
<feature type="compositionally biased region" description="Basic and acidic residues" evidence="2">
    <location>
        <begin position="113"/>
        <end position="124"/>
    </location>
</feature>
<accession>Q5RBE4</accession>
<proteinExistence type="evidence at transcript level"/>
<protein>
    <recommendedName>
        <fullName>Protein DEPP</fullName>
    </recommendedName>
</protein>
<reference key="1">
    <citation type="submission" date="2004-11" db="EMBL/GenBank/DDBJ databases">
        <authorList>
            <consortium name="The German cDNA consortium"/>
        </authorList>
    </citation>
    <scope>NUCLEOTIDE SEQUENCE [LARGE SCALE MRNA]</scope>
    <source>
        <tissue>Heart</tissue>
    </source>
</reference>
<name>DEPP_PONAB</name>